<comment type="function">
    <text evidence="1">DEAD-box RNA helicase possibly involved in RNA degradation. Unwinds dsRNA in both 5'- and 3'-directions, has RNA-dependent ATPase activity.</text>
</comment>
<comment type="catalytic activity">
    <reaction evidence="1">
        <text>ATP + H2O = ADP + phosphate + H(+)</text>
        <dbReference type="Rhea" id="RHEA:13065"/>
        <dbReference type="ChEBI" id="CHEBI:15377"/>
        <dbReference type="ChEBI" id="CHEBI:15378"/>
        <dbReference type="ChEBI" id="CHEBI:30616"/>
        <dbReference type="ChEBI" id="CHEBI:43474"/>
        <dbReference type="ChEBI" id="CHEBI:456216"/>
        <dbReference type="EC" id="3.6.4.13"/>
    </reaction>
</comment>
<comment type="subunit">
    <text evidence="1">Oligomerizes, may be a member of the RNA degradosome.</text>
</comment>
<comment type="subcellular location">
    <subcellularLocation>
        <location evidence="1">Cytoplasm</location>
    </subcellularLocation>
</comment>
<comment type="similarity">
    <text evidence="1">Belongs to the DEAD box helicase family. CshA subfamily.</text>
</comment>
<sequence length="506" mass="56942">MQNFKELGISDNTVQSLESMGFKEPTPIQKDSIPYALQGIDILGQAQTGTGKTGAFGIPLIEKVVGKQGVQSLILAPTRELAMQVAEQLREFSRGQGVQVVTVFGGMPIERQIKALKKGPQIVVGTPGRVIDHLNRRTLKTDGIHTLILDEADEMMNMGFIDDMRFIMDKIPAVQRQTMLFSATMPKAIQALVQQFMKSPKIIKTMNNEMSDPQIEEFYTIVKELEKFDTFTNFLDVHQPELAIVFGRTKRRVDELTSALISKGYKAEGLHGDITQAKRLEVLKKFKNDQINILVATDVAARGLDISGVSHVYNFDIPQDTESYTHRIGRTGRAGKEGIAVTFVNPIEMDYIRQIEDANGRKMSALRPPHRKEVLQAREDDIKEKVENWMSKESESRLKRISTELLNEYNDVDLVAALLQELVEANDEVEVQLTFEKPLSRKGRNGKPSGSRNRNSKRGNPKFDSKSKRSKGYSSKKKSTKKFDRKEKSSGGSRPMKGRTFADHQK</sequence>
<feature type="chain" id="PRO_0000284824" description="DEAD-box ATP-dependent RNA helicase CshA">
    <location>
        <begin position="1"/>
        <end position="506"/>
    </location>
</feature>
<feature type="domain" description="Helicase ATP-binding" evidence="1">
    <location>
        <begin position="33"/>
        <end position="203"/>
    </location>
</feature>
<feature type="domain" description="Helicase C-terminal" evidence="1">
    <location>
        <begin position="214"/>
        <end position="375"/>
    </location>
</feature>
<feature type="region of interest" description="Disordered" evidence="2">
    <location>
        <begin position="436"/>
        <end position="506"/>
    </location>
</feature>
<feature type="short sequence motif" description="Q motif">
    <location>
        <begin position="2"/>
        <end position="30"/>
    </location>
</feature>
<feature type="short sequence motif" description="DEAD box">
    <location>
        <begin position="150"/>
        <end position="153"/>
    </location>
</feature>
<feature type="compositionally biased region" description="Basic residues" evidence="2">
    <location>
        <begin position="468"/>
        <end position="480"/>
    </location>
</feature>
<feature type="binding site" evidence="1">
    <location>
        <begin position="46"/>
        <end position="53"/>
    </location>
    <ligand>
        <name>ATP</name>
        <dbReference type="ChEBI" id="CHEBI:30616"/>
    </ligand>
</feature>
<reference key="1">
    <citation type="journal article" date="2001" name="Lancet">
        <title>Whole genome sequencing of meticillin-resistant Staphylococcus aureus.</title>
        <authorList>
            <person name="Kuroda M."/>
            <person name="Ohta T."/>
            <person name="Uchiyama I."/>
            <person name="Baba T."/>
            <person name="Yuzawa H."/>
            <person name="Kobayashi I."/>
            <person name="Cui L."/>
            <person name="Oguchi A."/>
            <person name="Aoki K."/>
            <person name="Nagai Y."/>
            <person name="Lian J.-Q."/>
            <person name="Ito T."/>
            <person name="Kanamori M."/>
            <person name="Matsumaru H."/>
            <person name="Maruyama A."/>
            <person name="Murakami H."/>
            <person name="Hosoyama A."/>
            <person name="Mizutani-Ui Y."/>
            <person name="Takahashi N.K."/>
            <person name="Sawano T."/>
            <person name="Inoue R."/>
            <person name="Kaito C."/>
            <person name="Sekimizu K."/>
            <person name="Hirakawa H."/>
            <person name="Kuhara S."/>
            <person name="Goto S."/>
            <person name="Yabuzaki J."/>
            <person name="Kanehisa M."/>
            <person name="Yamashita A."/>
            <person name="Oshima K."/>
            <person name="Furuya K."/>
            <person name="Yoshino C."/>
            <person name="Shiba T."/>
            <person name="Hattori M."/>
            <person name="Ogasawara N."/>
            <person name="Hayashi H."/>
            <person name="Hiramatsu K."/>
        </authorList>
    </citation>
    <scope>NUCLEOTIDE SEQUENCE [LARGE SCALE GENOMIC DNA]</scope>
    <source>
        <strain>N315</strain>
    </source>
</reference>
<reference key="2">
    <citation type="submission" date="2007-10" db="UniProtKB">
        <title>Shotgun proteomic analysis of total and membrane protein extracts of S. aureus strain N315.</title>
        <authorList>
            <person name="Vaezzadeh A.R."/>
            <person name="Deshusses J."/>
            <person name="Lescuyer P."/>
            <person name="Hochstrasser D.F."/>
        </authorList>
    </citation>
    <scope>IDENTIFICATION BY MASS SPECTROMETRY [LARGE SCALE ANALYSIS]</scope>
    <source>
        <strain>N315</strain>
    </source>
</reference>
<evidence type="ECO:0000255" key="1">
    <source>
        <dbReference type="HAMAP-Rule" id="MF_01493"/>
    </source>
</evidence>
<evidence type="ECO:0000256" key="2">
    <source>
        <dbReference type="SAM" id="MobiDB-lite"/>
    </source>
</evidence>
<protein>
    <recommendedName>
        <fullName evidence="1">DEAD-box ATP-dependent RNA helicase CshA</fullName>
        <ecNumber evidence="1">3.6.4.13</ecNumber>
    </recommendedName>
</protein>
<keyword id="KW-0067">ATP-binding</keyword>
<keyword id="KW-0963">Cytoplasm</keyword>
<keyword id="KW-0347">Helicase</keyword>
<keyword id="KW-0378">Hydrolase</keyword>
<keyword id="KW-0547">Nucleotide-binding</keyword>
<keyword id="KW-0694">RNA-binding</keyword>
<keyword id="KW-0346">Stress response</keyword>
<organism>
    <name type="scientific">Staphylococcus aureus (strain N315)</name>
    <dbReference type="NCBI Taxonomy" id="158879"/>
    <lineage>
        <taxon>Bacteria</taxon>
        <taxon>Bacillati</taxon>
        <taxon>Bacillota</taxon>
        <taxon>Bacilli</taxon>
        <taxon>Bacillales</taxon>
        <taxon>Staphylococcaceae</taxon>
        <taxon>Staphylococcus</taxon>
    </lineage>
</organism>
<proteinExistence type="evidence at protein level"/>
<name>CSHA_STAAN</name>
<dbReference type="EC" id="3.6.4.13" evidence="1"/>
<dbReference type="EMBL" id="BA000018">
    <property type="protein sequence ID" value="BAB43168.1"/>
    <property type="molecule type" value="Genomic_DNA"/>
</dbReference>
<dbReference type="PIR" id="G90000">
    <property type="entry name" value="G90000"/>
</dbReference>
<dbReference type="RefSeq" id="WP_001178942.1">
    <property type="nucleotide sequence ID" value="NC_002745.2"/>
</dbReference>
<dbReference type="SMR" id="Q7A4G0"/>
<dbReference type="EnsemblBacteria" id="BAB43168">
    <property type="protein sequence ID" value="BAB43168"/>
    <property type="gene ID" value="BAB43168"/>
</dbReference>
<dbReference type="KEGG" id="sau:SA1885"/>
<dbReference type="HOGENOM" id="CLU_003041_21_1_9"/>
<dbReference type="BRENDA" id="3.6.4.13">
    <property type="organism ID" value="3352"/>
</dbReference>
<dbReference type="GO" id="GO:0005829">
    <property type="term" value="C:cytosol"/>
    <property type="evidence" value="ECO:0007669"/>
    <property type="project" value="TreeGrafter"/>
</dbReference>
<dbReference type="GO" id="GO:0005840">
    <property type="term" value="C:ribosome"/>
    <property type="evidence" value="ECO:0007669"/>
    <property type="project" value="TreeGrafter"/>
</dbReference>
<dbReference type="GO" id="GO:0005524">
    <property type="term" value="F:ATP binding"/>
    <property type="evidence" value="ECO:0007669"/>
    <property type="project" value="UniProtKB-UniRule"/>
</dbReference>
<dbReference type="GO" id="GO:0016887">
    <property type="term" value="F:ATP hydrolysis activity"/>
    <property type="evidence" value="ECO:0007669"/>
    <property type="project" value="RHEA"/>
</dbReference>
<dbReference type="GO" id="GO:0003724">
    <property type="term" value="F:RNA helicase activity"/>
    <property type="evidence" value="ECO:0007669"/>
    <property type="project" value="UniProtKB-UniRule"/>
</dbReference>
<dbReference type="GO" id="GO:0033592">
    <property type="term" value="F:RNA strand annealing activity"/>
    <property type="evidence" value="ECO:0007669"/>
    <property type="project" value="TreeGrafter"/>
</dbReference>
<dbReference type="GO" id="GO:0009409">
    <property type="term" value="P:response to cold"/>
    <property type="evidence" value="ECO:0007669"/>
    <property type="project" value="TreeGrafter"/>
</dbReference>
<dbReference type="GO" id="GO:0006401">
    <property type="term" value="P:RNA catabolic process"/>
    <property type="evidence" value="ECO:0007669"/>
    <property type="project" value="UniProtKB-UniRule"/>
</dbReference>
<dbReference type="CDD" id="cd00268">
    <property type="entry name" value="DEADc"/>
    <property type="match status" value="1"/>
</dbReference>
<dbReference type="CDD" id="cd18787">
    <property type="entry name" value="SF2_C_DEAD"/>
    <property type="match status" value="1"/>
</dbReference>
<dbReference type="FunFam" id="3.40.50.300:FF:000108">
    <property type="entry name" value="ATP-dependent RNA helicase RhlE"/>
    <property type="match status" value="1"/>
</dbReference>
<dbReference type="Gene3D" id="3.40.50.300">
    <property type="entry name" value="P-loop containing nucleotide triphosphate hydrolases"/>
    <property type="match status" value="2"/>
</dbReference>
<dbReference type="HAMAP" id="MF_01493">
    <property type="entry name" value="DEAD_helicase_CshA"/>
    <property type="match status" value="1"/>
</dbReference>
<dbReference type="InterPro" id="IPR011545">
    <property type="entry name" value="DEAD/DEAH_box_helicase_dom"/>
</dbReference>
<dbReference type="InterPro" id="IPR050547">
    <property type="entry name" value="DEAD_box_RNA_helicases"/>
</dbReference>
<dbReference type="InterPro" id="IPR030880">
    <property type="entry name" value="DEAD_helicase_CshA"/>
</dbReference>
<dbReference type="InterPro" id="IPR014001">
    <property type="entry name" value="Helicase_ATP-bd"/>
</dbReference>
<dbReference type="InterPro" id="IPR001650">
    <property type="entry name" value="Helicase_C-like"/>
</dbReference>
<dbReference type="InterPro" id="IPR027417">
    <property type="entry name" value="P-loop_NTPase"/>
</dbReference>
<dbReference type="InterPro" id="IPR000629">
    <property type="entry name" value="RNA-helicase_DEAD-box_CS"/>
</dbReference>
<dbReference type="InterPro" id="IPR014014">
    <property type="entry name" value="RNA_helicase_DEAD_Q_motif"/>
</dbReference>
<dbReference type="PANTHER" id="PTHR47963">
    <property type="entry name" value="DEAD-BOX ATP-DEPENDENT RNA HELICASE 47, MITOCHONDRIAL"/>
    <property type="match status" value="1"/>
</dbReference>
<dbReference type="PANTHER" id="PTHR47963:SF5">
    <property type="entry name" value="DEAD-BOX ATP-DEPENDENT RNA HELICASE CSHA"/>
    <property type="match status" value="1"/>
</dbReference>
<dbReference type="Pfam" id="PF00270">
    <property type="entry name" value="DEAD"/>
    <property type="match status" value="1"/>
</dbReference>
<dbReference type="Pfam" id="PF00271">
    <property type="entry name" value="Helicase_C"/>
    <property type="match status" value="1"/>
</dbReference>
<dbReference type="SMART" id="SM00487">
    <property type="entry name" value="DEXDc"/>
    <property type="match status" value="1"/>
</dbReference>
<dbReference type="SMART" id="SM00490">
    <property type="entry name" value="HELICc"/>
    <property type="match status" value="1"/>
</dbReference>
<dbReference type="SUPFAM" id="SSF52540">
    <property type="entry name" value="P-loop containing nucleoside triphosphate hydrolases"/>
    <property type="match status" value="1"/>
</dbReference>
<dbReference type="PROSITE" id="PS00039">
    <property type="entry name" value="DEAD_ATP_HELICASE"/>
    <property type="match status" value="1"/>
</dbReference>
<dbReference type="PROSITE" id="PS51192">
    <property type="entry name" value="HELICASE_ATP_BIND_1"/>
    <property type="match status" value="1"/>
</dbReference>
<dbReference type="PROSITE" id="PS51194">
    <property type="entry name" value="HELICASE_CTER"/>
    <property type="match status" value="1"/>
</dbReference>
<dbReference type="PROSITE" id="PS51195">
    <property type="entry name" value="Q_MOTIF"/>
    <property type="match status" value="1"/>
</dbReference>
<accession>Q7A4G0</accession>
<gene>
    <name evidence="1" type="primary">cshA</name>
    <name type="ordered locus">SA1885</name>
</gene>